<dbReference type="EMBL" id="EF614270">
    <property type="protein sequence ID" value="ABQ81443.1"/>
    <property type="molecule type" value="Genomic_DNA"/>
</dbReference>
<dbReference type="RefSeq" id="YP_001542440.1">
    <property type="nucleotide sequence ID" value="NC_009962.1"/>
</dbReference>
<dbReference type="SMR" id="A8SE90"/>
<dbReference type="GeneID" id="5729392"/>
<dbReference type="GO" id="GO:0009535">
    <property type="term" value="C:chloroplast thylakoid membrane"/>
    <property type="evidence" value="ECO:0007669"/>
    <property type="project" value="UniProtKB-SubCell"/>
</dbReference>
<dbReference type="GO" id="GO:0009512">
    <property type="term" value="C:cytochrome b6f complex"/>
    <property type="evidence" value="ECO:0007669"/>
    <property type="project" value="InterPro"/>
</dbReference>
<dbReference type="GO" id="GO:0045158">
    <property type="term" value="F:electron transporter, transferring electrons within cytochrome b6/f complex of photosystem II activity"/>
    <property type="evidence" value="ECO:0007669"/>
    <property type="project" value="InterPro"/>
</dbReference>
<dbReference type="GO" id="GO:0017004">
    <property type="term" value="P:cytochrome complex assembly"/>
    <property type="evidence" value="ECO:0007669"/>
    <property type="project" value="UniProtKB-UniRule"/>
</dbReference>
<dbReference type="GO" id="GO:0015979">
    <property type="term" value="P:photosynthesis"/>
    <property type="evidence" value="ECO:0007669"/>
    <property type="project" value="UniProtKB-KW"/>
</dbReference>
<dbReference type="HAMAP" id="MF_00395">
    <property type="entry name" value="Cytb6_f_PetN"/>
    <property type="match status" value="1"/>
</dbReference>
<dbReference type="InterPro" id="IPR036143">
    <property type="entry name" value="Cytochr_b6-f_cplx_su8_sf"/>
</dbReference>
<dbReference type="InterPro" id="IPR005497">
    <property type="entry name" value="Cytochrome_b6-f_cplx_su8"/>
</dbReference>
<dbReference type="Pfam" id="PF03742">
    <property type="entry name" value="PetN"/>
    <property type="match status" value="1"/>
</dbReference>
<dbReference type="SUPFAM" id="SSF103451">
    <property type="entry name" value="PetN subunit of the cytochrome b6f complex"/>
    <property type="match status" value="1"/>
</dbReference>
<accession>A8SE90</accession>
<gene>
    <name evidence="1" type="primary">petN</name>
</gene>
<sequence length="29" mass="3170">MDIVSLAWAALMVVFTFSLSLVVWGRSGL</sequence>
<name>PETN_CERDE</name>
<protein>
    <recommendedName>
        <fullName evidence="1">Cytochrome b6-f complex subunit 8</fullName>
    </recommendedName>
    <alternativeName>
        <fullName evidence="1">Cytochrome b6-f complex subunit PetN</fullName>
    </alternativeName>
    <alternativeName>
        <fullName evidence="1">Cytochrome b6-f complex subunit VIII</fullName>
    </alternativeName>
</protein>
<feature type="chain" id="PRO_0000355427" description="Cytochrome b6-f complex subunit 8">
    <location>
        <begin position="1"/>
        <end position="29"/>
    </location>
</feature>
<feature type="transmembrane region" description="Helical" evidence="1">
    <location>
        <begin position="3"/>
        <end position="23"/>
    </location>
</feature>
<reference key="1">
    <citation type="journal article" date="2007" name="Proc. Natl. Acad. Sci. U.S.A.">
        <title>Using plastid genome-scale data to resolve enigmatic relationships among basal angiosperms.</title>
        <authorList>
            <person name="Moore M.J."/>
            <person name="Bell C.D."/>
            <person name="Soltis P.S."/>
            <person name="Soltis D.E."/>
        </authorList>
    </citation>
    <scope>NUCLEOTIDE SEQUENCE [LARGE SCALE GENOMIC DNA]</scope>
</reference>
<evidence type="ECO:0000255" key="1">
    <source>
        <dbReference type="HAMAP-Rule" id="MF_00395"/>
    </source>
</evidence>
<comment type="function">
    <text evidence="1">Component of the cytochrome b6-f complex, which mediates electron transfer between photosystem II (PSII) and photosystem I (PSI), cyclic electron flow around PSI, and state transitions.</text>
</comment>
<comment type="subunit">
    <text evidence="1">The 4 large subunits of the cytochrome b6-f complex are cytochrome b6, subunit IV (17 kDa polypeptide, PetD), cytochrome f and the Rieske protein, while the 4 small subunits are PetG, PetL, PetM and PetN. The complex functions as a dimer.</text>
</comment>
<comment type="subcellular location">
    <subcellularLocation>
        <location evidence="1">Plastid</location>
        <location evidence="1">Chloroplast thylakoid membrane</location>
        <topology evidence="1">Single-pass membrane protein</topology>
    </subcellularLocation>
</comment>
<comment type="similarity">
    <text evidence="1">Belongs to the PetN family.</text>
</comment>
<organism>
    <name type="scientific">Ceratophyllum demersum</name>
    <name type="common">Rigid hornwort</name>
    <name type="synonym">Coontail</name>
    <dbReference type="NCBI Taxonomy" id="4428"/>
    <lineage>
        <taxon>Eukaryota</taxon>
        <taxon>Viridiplantae</taxon>
        <taxon>Streptophyta</taxon>
        <taxon>Embryophyta</taxon>
        <taxon>Tracheophyta</taxon>
        <taxon>Spermatophyta</taxon>
        <taxon>Magnoliopsida</taxon>
        <taxon>Ceratophyllales</taxon>
        <taxon>Ceratophyllaceae</taxon>
        <taxon>Ceratophyllum</taxon>
    </lineage>
</organism>
<keyword id="KW-0150">Chloroplast</keyword>
<keyword id="KW-0249">Electron transport</keyword>
<keyword id="KW-0472">Membrane</keyword>
<keyword id="KW-0602">Photosynthesis</keyword>
<keyword id="KW-0934">Plastid</keyword>
<keyword id="KW-0793">Thylakoid</keyword>
<keyword id="KW-0812">Transmembrane</keyword>
<keyword id="KW-1133">Transmembrane helix</keyword>
<keyword id="KW-0813">Transport</keyword>
<proteinExistence type="inferred from homology"/>
<geneLocation type="chloroplast"/>